<proteinExistence type="inferred from homology"/>
<dbReference type="EC" id="2.3.1.15" evidence="1"/>
<dbReference type="EC" id="2.3.1.n5" evidence="1"/>
<dbReference type="EMBL" id="CP000026">
    <property type="protein sequence ID" value="AAV78910.1"/>
    <property type="molecule type" value="Genomic_DNA"/>
</dbReference>
<dbReference type="RefSeq" id="WP_001272784.1">
    <property type="nucleotide sequence ID" value="NC_006511.1"/>
</dbReference>
<dbReference type="SMR" id="Q5PC79"/>
<dbReference type="KEGG" id="spt:SPA3075"/>
<dbReference type="HOGENOM" id="CLU_081254_0_2_6"/>
<dbReference type="UniPathway" id="UPA00085"/>
<dbReference type="Proteomes" id="UP000008185">
    <property type="component" value="Chromosome"/>
</dbReference>
<dbReference type="GO" id="GO:0005886">
    <property type="term" value="C:plasma membrane"/>
    <property type="evidence" value="ECO:0007669"/>
    <property type="project" value="UniProtKB-SubCell"/>
</dbReference>
<dbReference type="GO" id="GO:0043772">
    <property type="term" value="F:acyl-phosphate glycerol-3-phosphate acyltransferase activity"/>
    <property type="evidence" value="ECO:0007669"/>
    <property type="project" value="InterPro"/>
</dbReference>
<dbReference type="GO" id="GO:0004366">
    <property type="term" value="F:glycerol-3-phosphate O-acyltransferase activity"/>
    <property type="evidence" value="ECO:0007669"/>
    <property type="project" value="UniProtKB-UniRule"/>
</dbReference>
<dbReference type="GO" id="GO:0008654">
    <property type="term" value="P:phospholipid biosynthetic process"/>
    <property type="evidence" value="ECO:0007669"/>
    <property type="project" value="UniProtKB-UniRule"/>
</dbReference>
<dbReference type="HAMAP" id="MF_01043">
    <property type="entry name" value="PlsY"/>
    <property type="match status" value="1"/>
</dbReference>
<dbReference type="InterPro" id="IPR003811">
    <property type="entry name" value="G3P_acylTferase_PlsY"/>
</dbReference>
<dbReference type="NCBIfam" id="TIGR00023">
    <property type="entry name" value="glycerol-3-phosphate 1-O-acyltransferase PlsY"/>
    <property type="match status" value="1"/>
</dbReference>
<dbReference type="PANTHER" id="PTHR30309:SF0">
    <property type="entry name" value="GLYCEROL-3-PHOSPHATE ACYLTRANSFERASE-RELATED"/>
    <property type="match status" value="1"/>
</dbReference>
<dbReference type="PANTHER" id="PTHR30309">
    <property type="entry name" value="INNER MEMBRANE PROTEIN YGIH"/>
    <property type="match status" value="1"/>
</dbReference>
<dbReference type="Pfam" id="PF02660">
    <property type="entry name" value="G3P_acyltransf"/>
    <property type="match status" value="1"/>
</dbReference>
<dbReference type="SMART" id="SM01207">
    <property type="entry name" value="G3P_acyltransf"/>
    <property type="match status" value="1"/>
</dbReference>
<feature type="chain" id="PRO_0000188440" description="Glycerol-3-phosphate acyltransferase">
    <location>
        <begin position="1"/>
        <end position="203"/>
    </location>
</feature>
<feature type="topological domain" description="Periplasmic" evidence="1">
    <location>
        <begin position="1"/>
        <end position="3"/>
    </location>
</feature>
<feature type="transmembrane region" description="Helical" evidence="1">
    <location>
        <begin position="4"/>
        <end position="24"/>
    </location>
</feature>
<feature type="topological domain" description="Cytoplasmic" evidence="1">
    <location>
        <begin position="25"/>
        <end position="52"/>
    </location>
</feature>
<feature type="transmembrane region" description="Helical" evidence="1">
    <location>
        <begin position="53"/>
        <end position="73"/>
    </location>
</feature>
<feature type="topological domain" description="Periplasmic" evidence="1">
    <location>
        <begin position="74"/>
        <end position="80"/>
    </location>
</feature>
<feature type="transmembrane region" description="Helical" evidence="1">
    <location>
        <begin position="81"/>
        <end position="101"/>
    </location>
</feature>
<feature type="topological domain" description="Cytoplasmic" evidence="1">
    <location>
        <begin position="102"/>
        <end position="111"/>
    </location>
</feature>
<feature type="transmembrane region" description="Helical" evidence="1">
    <location>
        <begin position="112"/>
        <end position="132"/>
    </location>
</feature>
<feature type="topological domain" description="Periplasmic" evidence="1">
    <location>
        <begin position="133"/>
        <end position="137"/>
    </location>
</feature>
<feature type="transmembrane region" description="Helical" evidence="1">
    <location>
        <begin position="138"/>
        <end position="158"/>
    </location>
</feature>
<feature type="topological domain" description="Cytoplasmic" evidence="1">
    <location>
        <begin position="159"/>
        <end position="203"/>
    </location>
</feature>
<reference key="1">
    <citation type="journal article" date="2004" name="Nat. Genet.">
        <title>Comparison of genome degradation in Paratyphi A and Typhi, human-restricted serovars of Salmonella enterica that cause typhoid.</title>
        <authorList>
            <person name="McClelland M."/>
            <person name="Sanderson K.E."/>
            <person name="Clifton S.W."/>
            <person name="Latreille P."/>
            <person name="Porwollik S."/>
            <person name="Sabo A."/>
            <person name="Meyer R."/>
            <person name="Bieri T."/>
            <person name="Ozersky P."/>
            <person name="McLellan M."/>
            <person name="Harkins C.R."/>
            <person name="Wang C."/>
            <person name="Nguyen C."/>
            <person name="Berghoff A."/>
            <person name="Elliott G."/>
            <person name="Kohlberg S."/>
            <person name="Strong C."/>
            <person name="Du F."/>
            <person name="Carter J."/>
            <person name="Kremizki C."/>
            <person name="Layman D."/>
            <person name="Leonard S."/>
            <person name="Sun H."/>
            <person name="Fulton L."/>
            <person name="Nash W."/>
            <person name="Miner T."/>
            <person name="Minx P."/>
            <person name="Delehaunty K."/>
            <person name="Fronick C."/>
            <person name="Magrini V."/>
            <person name="Nhan M."/>
            <person name="Warren W."/>
            <person name="Florea L."/>
            <person name="Spieth J."/>
            <person name="Wilson R.K."/>
        </authorList>
    </citation>
    <scope>NUCLEOTIDE SEQUENCE [LARGE SCALE GENOMIC DNA]</scope>
    <source>
        <strain>ATCC 9150 / SARB42</strain>
    </source>
</reference>
<name>PLSY_SALPA</name>
<comment type="function">
    <text evidence="1">Catalyzes the transfer of an acyl group from acyl-ACP to glycerol-3-phosphate (G3P) to form lysophosphatidic acid (LPA). This enzyme can also utilize acyl-CoA as fatty acyl donor, but not acyl-PO(4).</text>
</comment>
<comment type="catalytic activity">
    <reaction evidence="1">
        <text>sn-glycerol 3-phosphate + an acyl-CoA = a 1-acyl-sn-glycero-3-phosphate + CoA</text>
        <dbReference type="Rhea" id="RHEA:15325"/>
        <dbReference type="ChEBI" id="CHEBI:57287"/>
        <dbReference type="ChEBI" id="CHEBI:57597"/>
        <dbReference type="ChEBI" id="CHEBI:57970"/>
        <dbReference type="ChEBI" id="CHEBI:58342"/>
        <dbReference type="EC" id="2.3.1.15"/>
    </reaction>
</comment>
<comment type="catalytic activity">
    <reaction evidence="1">
        <text>a fatty acyl-[ACP] + sn-glycerol 3-phosphate = a 1-acyl-sn-glycero-3-phosphate + holo-[ACP]</text>
        <dbReference type="Rhea" id="RHEA:42300"/>
        <dbReference type="Rhea" id="RHEA-COMP:9685"/>
        <dbReference type="Rhea" id="RHEA-COMP:14125"/>
        <dbReference type="ChEBI" id="CHEBI:57597"/>
        <dbReference type="ChEBI" id="CHEBI:57970"/>
        <dbReference type="ChEBI" id="CHEBI:64479"/>
        <dbReference type="ChEBI" id="CHEBI:138651"/>
        <dbReference type="EC" id="2.3.1.n5"/>
    </reaction>
</comment>
<comment type="pathway">
    <text evidence="1">Lipid metabolism; phospholipid metabolism.</text>
</comment>
<comment type="subunit">
    <text evidence="1">Probably interacts with PlsX.</text>
</comment>
<comment type="subcellular location">
    <subcellularLocation>
        <location evidence="1">Cell inner membrane</location>
        <topology evidence="1">Multi-pass membrane protein</topology>
    </subcellularLocation>
</comment>
<comment type="similarity">
    <text evidence="1">Belongs to the PlsY family.</text>
</comment>
<sequence>MSAIAPGMILFAYLCGSISSAILVCRIAGLPDPRESGSGNPGATNVLRIGGKGAAVAVLIFDILKGMLPVWGAYALGVTPFWLGLIAIAACLGHIWPVFFGFKGGKGVATAFGAIAPIGWDLTGVMAGTWLLTVLLSGYSSLGAIVSALIAPFYVWWFKPQFTFPVSMLSCLILLRHHDNIQRLWRRQETKIWTKLKKKRQKD</sequence>
<keyword id="KW-0997">Cell inner membrane</keyword>
<keyword id="KW-1003">Cell membrane</keyword>
<keyword id="KW-0444">Lipid biosynthesis</keyword>
<keyword id="KW-0443">Lipid metabolism</keyword>
<keyword id="KW-0472">Membrane</keyword>
<keyword id="KW-0594">Phospholipid biosynthesis</keyword>
<keyword id="KW-1208">Phospholipid metabolism</keyword>
<keyword id="KW-0808">Transferase</keyword>
<keyword id="KW-0812">Transmembrane</keyword>
<keyword id="KW-1133">Transmembrane helix</keyword>
<evidence type="ECO:0000255" key="1">
    <source>
        <dbReference type="HAMAP-Rule" id="MF_01043"/>
    </source>
</evidence>
<gene>
    <name evidence="1" type="primary">plsY</name>
    <name type="synonym">ygiH</name>
    <name type="ordered locus">SPA3075</name>
</gene>
<protein>
    <recommendedName>
        <fullName evidence="1">Glycerol-3-phosphate acyltransferase</fullName>
    </recommendedName>
    <alternativeName>
        <fullName evidence="1">G3P acyltransferase</fullName>
        <shortName evidence="1">GPAT</shortName>
        <ecNumber evidence="1">2.3.1.15</ecNumber>
        <ecNumber evidence="1">2.3.1.n5</ecNumber>
    </alternativeName>
    <alternativeName>
        <fullName evidence="1">Lysophosphatidic acid synthase</fullName>
        <shortName evidence="1">LPA synthase</shortName>
    </alternativeName>
</protein>
<accession>Q5PC79</accession>
<organism>
    <name type="scientific">Salmonella paratyphi A (strain ATCC 9150 / SARB42)</name>
    <dbReference type="NCBI Taxonomy" id="295319"/>
    <lineage>
        <taxon>Bacteria</taxon>
        <taxon>Pseudomonadati</taxon>
        <taxon>Pseudomonadota</taxon>
        <taxon>Gammaproteobacteria</taxon>
        <taxon>Enterobacterales</taxon>
        <taxon>Enterobacteriaceae</taxon>
        <taxon>Salmonella</taxon>
    </lineage>
</organism>